<gene>
    <name evidence="1" type="primary">rpsH</name>
    <name type="ordered locus">EcHS_A3500</name>
</gene>
<comment type="function">
    <text evidence="1">One of the primary rRNA binding proteins, it binds directly to 16S rRNA central domain where it helps coordinate assembly of the platform of the 30S subunit.</text>
</comment>
<comment type="subunit">
    <text evidence="1">Part of the 30S ribosomal subunit. Contacts proteins S5 and S12.</text>
</comment>
<comment type="similarity">
    <text evidence="1">Belongs to the universal ribosomal protein uS8 family.</text>
</comment>
<organism>
    <name type="scientific">Escherichia coli O9:H4 (strain HS)</name>
    <dbReference type="NCBI Taxonomy" id="331112"/>
    <lineage>
        <taxon>Bacteria</taxon>
        <taxon>Pseudomonadati</taxon>
        <taxon>Pseudomonadota</taxon>
        <taxon>Gammaproteobacteria</taxon>
        <taxon>Enterobacterales</taxon>
        <taxon>Enterobacteriaceae</taxon>
        <taxon>Escherichia</taxon>
    </lineage>
</organism>
<sequence>MSMQDPIADMLTRIRNGQAANKAAVTMPSSKLKVAIANVLKEEGFIEDFKVEGDTKPELELTLKYFQGKAVVESIQRVSRPGLRIYKRKDELPKVMAGLGIAVVSTSKGVMTDRAARQAGLGGEIICYVA</sequence>
<accession>A8A5B1</accession>
<evidence type="ECO:0000255" key="1">
    <source>
        <dbReference type="HAMAP-Rule" id="MF_01302"/>
    </source>
</evidence>
<evidence type="ECO:0000305" key="2"/>
<proteinExistence type="inferred from homology"/>
<keyword id="KW-0687">Ribonucleoprotein</keyword>
<keyword id="KW-0689">Ribosomal protein</keyword>
<keyword id="KW-0694">RNA-binding</keyword>
<keyword id="KW-0699">rRNA-binding</keyword>
<dbReference type="EMBL" id="CP000802">
    <property type="protein sequence ID" value="ABV07715.1"/>
    <property type="molecule type" value="Genomic_DNA"/>
</dbReference>
<dbReference type="RefSeq" id="WP_000062611.1">
    <property type="nucleotide sequence ID" value="NC_009800.1"/>
</dbReference>
<dbReference type="SMR" id="A8A5B1"/>
<dbReference type="GeneID" id="93778681"/>
<dbReference type="KEGG" id="ecx:EcHS_A3500"/>
<dbReference type="HOGENOM" id="CLU_098428_0_0_6"/>
<dbReference type="GO" id="GO:1990904">
    <property type="term" value="C:ribonucleoprotein complex"/>
    <property type="evidence" value="ECO:0007669"/>
    <property type="project" value="UniProtKB-KW"/>
</dbReference>
<dbReference type="GO" id="GO:0005840">
    <property type="term" value="C:ribosome"/>
    <property type="evidence" value="ECO:0007669"/>
    <property type="project" value="UniProtKB-KW"/>
</dbReference>
<dbReference type="GO" id="GO:0019843">
    <property type="term" value="F:rRNA binding"/>
    <property type="evidence" value="ECO:0007669"/>
    <property type="project" value="UniProtKB-UniRule"/>
</dbReference>
<dbReference type="GO" id="GO:0003735">
    <property type="term" value="F:structural constituent of ribosome"/>
    <property type="evidence" value="ECO:0007669"/>
    <property type="project" value="InterPro"/>
</dbReference>
<dbReference type="GO" id="GO:0006412">
    <property type="term" value="P:translation"/>
    <property type="evidence" value="ECO:0007669"/>
    <property type="project" value="UniProtKB-UniRule"/>
</dbReference>
<dbReference type="FunFam" id="3.30.1370.30:FF:000003">
    <property type="entry name" value="30S ribosomal protein S8"/>
    <property type="match status" value="1"/>
</dbReference>
<dbReference type="FunFam" id="3.30.1490.10:FF:000001">
    <property type="entry name" value="30S ribosomal protein S8"/>
    <property type="match status" value="1"/>
</dbReference>
<dbReference type="Gene3D" id="3.30.1370.30">
    <property type="match status" value="1"/>
</dbReference>
<dbReference type="Gene3D" id="3.30.1490.10">
    <property type="match status" value="1"/>
</dbReference>
<dbReference type="HAMAP" id="MF_01302_B">
    <property type="entry name" value="Ribosomal_uS8_B"/>
    <property type="match status" value="1"/>
</dbReference>
<dbReference type="InterPro" id="IPR000630">
    <property type="entry name" value="Ribosomal_uS8"/>
</dbReference>
<dbReference type="InterPro" id="IPR047863">
    <property type="entry name" value="Ribosomal_uS8_CS"/>
</dbReference>
<dbReference type="InterPro" id="IPR035987">
    <property type="entry name" value="Ribosomal_uS8_sf"/>
</dbReference>
<dbReference type="NCBIfam" id="NF001109">
    <property type="entry name" value="PRK00136.1"/>
    <property type="match status" value="1"/>
</dbReference>
<dbReference type="PANTHER" id="PTHR11758">
    <property type="entry name" value="40S RIBOSOMAL PROTEIN S15A"/>
    <property type="match status" value="1"/>
</dbReference>
<dbReference type="Pfam" id="PF00410">
    <property type="entry name" value="Ribosomal_S8"/>
    <property type="match status" value="1"/>
</dbReference>
<dbReference type="SUPFAM" id="SSF56047">
    <property type="entry name" value="Ribosomal protein S8"/>
    <property type="match status" value="1"/>
</dbReference>
<dbReference type="PROSITE" id="PS00053">
    <property type="entry name" value="RIBOSOMAL_S8"/>
    <property type="match status" value="1"/>
</dbReference>
<name>RS8_ECOHS</name>
<feature type="chain" id="PRO_1000067486" description="Small ribosomal subunit protein uS8">
    <location>
        <begin position="1"/>
        <end position="130"/>
    </location>
</feature>
<protein>
    <recommendedName>
        <fullName evidence="1">Small ribosomal subunit protein uS8</fullName>
    </recommendedName>
    <alternativeName>
        <fullName evidence="2">30S ribosomal protein S8</fullName>
    </alternativeName>
</protein>
<reference key="1">
    <citation type="journal article" date="2008" name="J. Bacteriol.">
        <title>The pangenome structure of Escherichia coli: comparative genomic analysis of E. coli commensal and pathogenic isolates.</title>
        <authorList>
            <person name="Rasko D.A."/>
            <person name="Rosovitz M.J."/>
            <person name="Myers G.S.A."/>
            <person name="Mongodin E.F."/>
            <person name="Fricke W.F."/>
            <person name="Gajer P."/>
            <person name="Crabtree J."/>
            <person name="Sebaihia M."/>
            <person name="Thomson N.R."/>
            <person name="Chaudhuri R."/>
            <person name="Henderson I.R."/>
            <person name="Sperandio V."/>
            <person name="Ravel J."/>
        </authorList>
    </citation>
    <scope>NUCLEOTIDE SEQUENCE [LARGE SCALE GENOMIC DNA]</scope>
    <source>
        <strain>HS</strain>
    </source>
</reference>